<keyword id="KW-1185">Reference proteome</keyword>
<organism>
    <name type="scientific">Archaeoglobus fulgidus (strain ATCC 49558 / DSM 4304 / JCM 9628 / NBRC 100126 / VC-16)</name>
    <dbReference type="NCBI Taxonomy" id="224325"/>
    <lineage>
        <taxon>Archaea</taxon>
        <taxon>Methanobacteriati</taxon>
        <taxon>Methanobacteriota</taxon>
        <taxon>Archaeoglobi</taxon>
        <taxon>Archaeoglobales</taxon>
        <taxon>Archaeoglobaceae</taxon>
        <taxon>Archaeoglobus</taxon>
    </lineage>
</organism>
<accession>O29830</accession>
<feature type="chain" id="PRO_0000127875" description="Uncharacterized protein AF_0417">
    <location>
        <begin position="1"/>
        <end position="190"/>
    </location>
</feature>
<dbReference type="EMBL" id="AE000782">
    <property type="protein sequence ID" value="AAB90821.1"/>
    <property type="molecule type" value="Genomic_DNA"/>
</dbReference>
<dbReference type="PIR" id="A69302">
    <property type="entry name" value="A69302"/>
</dbReference>
<dbReference type="RefSeq" id="WP_010877924.1">
    <property type="nucleotide sequence ID" value="NC_000917.1"/>
</dbReference>
<dbReference type="STRING" id="224325.AF_0417"/>
<dbReference type="PaxDb" id="224325-AF_0417"/>
<dbReference type="EnsemblBacteria" id="AAB90821">
    <property type="protein sequence ID" value="AAB90821"/>
    <property type="gene ID" value="AF_0417"/>
</dbReference>
<dbReference type="KEGG" id="afu:AF_0417"/>
<dbReference type="eggNOG" id="arCOG11576">
    <property type="taxonomic scope" value="Archaea"/>
</dbReference>
<dbReference type="HOGENOM" id="CLU_084169_2_0_2"/>
<dbReference type="OrthoDB" id="326405at2157"/>
<dbReference type="Proteomes" id="UP000002199">
    <property type="component" value="Chromosome"/>
</dbReference>
<dbReference type="InterPro" id="IPR024510">
    <property type="entry name" value="DUF2589"/>
</dbReference>
<dbReference type="Pfam" id="PF11655">
    <property type="entry name" value="DUF2589"/>
    <property type="match status" value="1"/>
</dbReference>
<name>Y417_ARCFU</name>
<sequence>MVGANIPAELAALPIESLIGKPLEAAVRAQAFAAMTTARFVQEVGLDDDGNVKTVTFKFKRKELDPETGDVTDVDTTVEAPLLTILPVPFIRIKDMTVHFNFTIKTSAQDKTQHDFASKLTAKAGWGWGSVKLTASYGFKKESRSQVDRSSELDITVNAVQDEMPEGMRTLLSLLKESIAPAGASGGGTG</sequence>
<proteinExistence type="predicted"/>
<protein>
    <recommendedName>
        <fullName>Uncharacterized protein AF_0417</fullName>
    </recommendedName>
</protein>
<reference key="1">
    <citation type="journal article" date="1997" name="Nature">
        <title>The complete genome sequence of the hyperthermophilic, sulphate-reducing archaeon Archaeoglobus fulgidus.</title>
        <authorList>
            <person name="Klenk H.-P."/>
            <person name="Clayton R.A."/>
            <person name="Tomb J.-F."/>
            <person name="White O."/>
            <person name="Nelson K.E."/>
            <person name="Ketchum K.A."/>
            <person name="Dodson R.J."/>
            <person name="Gwinn M.L."/>
            <person name="Hickey E.K."/>
            <person name="Peterson J.D."/>
            <person name="Richardson D.L."/>
            <person name="Kerlavage A.R."/>
            <person name="Graham D.E."/>
            <person name="Kyrpides N.C."/>
            <person name="Fleischmann R.D."/>
            <person name="Quackenbush J."/>
            <person name="Lee N.H."/>
            <person name="Sutton G.G."/>
            <person name="Gill S.R."/>
            <person name="Kirkness E.F."/>
            <person name="Dougherty B.A."/>
            <person name="McKenney K."/>
            <person name="Adams M.D."/>
            <person name="Loftus B.J."/>
            <person name="Peterson S.N."/>
            <person name="Reich C.I."/>
            <person name="McNeil L.K."/>
            <person name="Badger J.H."/>
            <person name="Glodek A."/>
            <person name="Zhou L."/>
            <person name="Overbeek R."/>
            <person name="Gocayne J.D."/>
            <person name="Weidman J.F."/>
            <person name="McDonald L.A."/>
            <person name="Utterback T.R."/>
            <person name="Cotton M.D."/>
            <person name="Spriggs T."/>
            <person name="Artiach P."/>
            <person name="Kaine B.P."/>
            <person name="Sykes S.M."/>
            <person name="Sadow P.W."/>
            <person name="D'Andrea K.P."/>
            <person name="Bowman C."/>
            <person name="Fujii C."/>
            <person name="Garland S.A."/>
            <person name="Mason T.M."/>
            <person name="Olsen G.J."/>
            <person name="Fraser C.M."/>
            <person name="Smith H.O."/>
            <person name="Woese C.R."/>
            <person name="Venter J.C."/>
        </authorList>
    </citation>
    <scope>NUCLEOTIDE SEQUENCE [LARGE SCALE GENOMIC DNA]</scope>
    <source>
        <strain>ATCC 49558 / DSM 4304 / JCM 9628 / NBRC 100126 / VC-16</strain>
    </source>
</reference>
<gene>
    <name type="ordered locus">AF_0417</name>
</gene>